<feature type="chain" id="PRO_0000305468" description="Pantothenate synthetase">
    <location>
        <begin position="1"/>
        <end position="252"/>
    </location>
</feature>
<feature type="active site" description="Proton donor" evidence="1">
    <location>
        <position position="36"/>
    </location>
</feature>
<feature type="binding site" evidence="1">
    <location>
        <begin position="29"/>
        <end position="36"/>
    </location>
    <ligand>
        <name>ATP</name>
        <dbReference type="ChEBI" id="CHEBI:30616"/>
    </ligand>
</feature>
<feature type="binding site" evidence="1">
    <location>
        <position position="60"/>
    </location>
    <ligand>
        <name>(R)-pantoate</name>
        <dbReference type="ChEBI" id="CHEBI:15980"/>
    </ligand>
</feature>
<feature type="binding site" evidence="1">
    <location>
        <position position="60"/>
    </location>
    <ligand>
        <name>beta-alanine</name>
        <dbReference type="ChEBI" id="CHEBI:57966"/>
    </ligand>
</feature>
<feature type="binding site" evidence="1">
    <location>
        <begin position="146"/>
        <end position="149"/>
    </location>
    <ligand>
        <name>ATP</name>
        <dbReference type="ChEBI" id="CHEBI:30616"/>
    </ligand>
</feature>
<feature type="binding site" evidence="1">
    <location>
        <position position="152"/>
    </location>
    <ligand>
        <name>(R)-pantoate</name>
        <dbReference type="ChEBI" id="CHEBI:15980"/>
    </ligand>
</feature>
<feature type="binding site" evidence="1">
    <location>
        <position position="175"/>
    </location>
    <ligand>
        <name>ATP</name>
        <dbReference type="ChEBI" id="CHEBI:30616"/>
    </ligand>
</feature>
<feature type="binding site" evidence="1">
    <location>
        <begin position="183"/>
        <end position="186"/>
    </location>
    <ligand>
        <name>ATP</name>
        <dbReference type="ChEBI" id="CHEBI:30616"/>
    </ligand>
</feature>
<organism>
    <name type="scientific">Legionella pneumophila (strain Lens)</name>
    <dbReference type="NCBI Taxonomy" id="297245"/>
    <lineage>
        <taxon>Bacteria</taxon>
        <taxon>Pseudomonadati</taxon>
        <taxon>Pseudomonadota</taxon>
        <taxon>Gammaproteobacteria</taxon>
        <taxon>Legionellales</taxon>
        <taxon>Legionellaceae</taxon>
        <taxon>Legionella</taxon>
    </lineage>
</organism>
<proteinExistence type="inferred from homology"/>
<protein>
    <recommendedName>
        <fullName evidence="1">Pantothenate synthetase</fullName>
        <shortName evidence="1">PS</shortName>
        <ecNumber evidence="1">6.3.2.1</ecNumber>
    </recommendedName>
    <alternativeName>
        <fullName evidence="1">Pantoate--beta-alanine ligase</fullName>
    </alternativeName>
    <alternativeName>
        <fullName evidence="1">Pantoate-activating enzyme</fullName>
    </alternativeName>
</protein>
<gene>
    <name evidence="1" type="primary">panC</name>
    <name type="ordered locus">lpl2589</name>
</gene>
<reference key="1">
    <citation type="journal article" date="2004" name="Nat. Genet.">
        <title>Evidence in the Legionella pneumophila genome for exploitation of host cell functions and high genome plasticity.</title>
        <authorList>
            <person name="Cazalet C."/>
            <person name="Rusniok C."/>
            <person name="Brueggemann H."/>
            <person name="Zidane N."/>
            <person name="Magnier A."/>
            <person name="Ma L."/>
            <person name="Tichit M."/>
            <person name="Jarraud S."/>
            <person name="Bouchier C."/>
            <person name="Vandenesch F."/>
            <person name="Kunst F."/>
            <person name="Etienne J."/>
            <person name="Glaser P."/>
            <person name="Buchrieser C."/>
        </authorList>
    </citation>
    <scope>NUCLEOTIDE SEQUENCE [LARGE SCALE GENOMIC DNA]</scope>
    <source>
        <strain>Lens</strain>
    </source>
</reference>
<accession>Q5WTD6</accession>
<sequence>MQIFHNLNEWIRFRNSLSPDLSLGFAPTMGNLHAGHASLFLASSKENHYTVSSLFVNPTQFNNPDDYKHYPRTVDADLELMTQNGVDFCILPNENEIYADGYAYQVQENRFGQLMEGKHRPGHFNGVLTIVMKLFNLVKPTRAYFGEKDYQQLLLIQGMVKALFMDIEIKSCPTVREKSGLACSSRNNRLTPSQREIADEFAKIFHQNKSSAMISKELEALGITVEYIEEFQGRRFAAVKIGDIRLIDNYLL</sequence>
<evidence type="ECO:0000255" key="1">
    <source>
        <dbReference type="HAMAP-Rule" id="MF_00158"/>
    </source>
</evidence>
<comment type="function">
    <text evidence="1">Catalyzes the condensation of pantoate with beta-alanine in an ATP-dependent reaction via a pantoyl-adenylate intermediate.</text>
</comment>
<comment type="catalytic activity">
    <reaction evidence="1">
        <text>(R)-pantoate + beta-alanine + ATP = (R)-pantothenate + AMP + diphosphate + H(+)</text>
        <dbReference type="Rhea" id="RHEA:10912"/>
        <dbReference type="ChEBI" id="CHEBI:15378"/>
        <dbReference type="ChEBI" id="CHEBI:15980"/>
        <dbReference type="ChEBI" id="CHEBI:29032"/>
        <dbReference type="ChEBI" id="CHEBI:30616"/>
        <dbReference type="ChEBI" id="CHEBI:33019"/>
        <dbReference type="ChEBI" id="CHEBI:57966"/>
        <dbReference type="ChEBI" id="CHEBI:456215"/>
        <dbReference type="EC" id="6.3.2.1"/>
    </reaction>
</comment>
<comment type="pathway">
    <text evidence="1">Cofactor biosynthesis; (R)-pantothenate biosynthesis; (R)-pantothenate from (R)-pantoate and beta-alanine: step 1/1.</text>
</comment>
<comment type="subunit">
    <text evidence="1">Homodimer.</text>
</comment>
<comment type="subcellular location">
    <subcellularLocation>
        <location evidence="1">Cytoplasm</location>
    </subcellularLocation>
</comment>
<comment type="miscellaneous">
    <text evidence="1">The reaction proceeds by a bi uni uni bi ping pong mechanism.</text>
</comment>
<comment type="similarity">
    <text evidence="1">Belongs to the pantothenate synthetase family.</text>
</comment>
<dbReference type="EC" id="6.3.2.1" evidence="1"/>
<dbReference type="EMBL" id="CR628337">
    <property type="protein sequence ID" value="CAH16830.1"/>
    <property type="molecule type" value="Genomic_DNA"/>
</dbReference>
<dbReference type="RefSeq" id="WP_011216532.1">
    <property type="nucleotide sequence ID" value="NC_006369.1"/>
</dbReference>
<dbReference type="SMR" id="Q5WTD6"/>
<dbReference type="KEGG" id="lpf:lpl2589"/>
<dbReference type="LegioList" id="lpl2589"/>
<dbReference type="HOGENOM" id="CLU_047148_0_0_6"/>
<dbReference type="UniPathway" id="UPA00028">
    <property type="reaction ID" value="UER00005"/>
</dbReference>
<dbReference type="Proteomes" id="UP000002517">
    <property type="component" value="Chromosome"/>
</dbReference>
<dbReference type="GO" id="GO:0005829">
    <property type="term" value="C:cytosol"/>
    <property type="evidence" value="ECO:0007669"/>
    <property type="project" value="TreeGrafter"/>
</dbReference>
<dbReference type="GO" id="GO:0005524">
    <property type="term" value="F:ATP binding"/>
    <property type="evidence" value="ECO:0007669"/>
    <property type="project" value="UniProtKB-KW"/>
</dbReference>
<dbReference type="GO" id="GO:0004592">
    <property type="term" value="F:pantoate-beta-alanine ligase activity"/>
    <property type="evidence" value="ECO:0007669"/>
    <property type="project" value="UniProtKB-UniRule"/>
</dbReference>
<dbReference type="GO" id="GO:0015940">
    <property type="term" value="P:pantothenate biosynthetic process"/>
    <property type="evidence" value="ECO:0007669"/>
    <property type="project" value="UniProtKB-UniRule"/>
</dbReference>
<dbReference type="Gene3D" id="3.40.50.620">
    <property type="entry name" value="HUPs"/>
    <property type="match status" value="1"/>
</dbReference>
<dbReference type="Gene3D" id="3.30.1300.10">
    <property type="entry name" value="Pantoate-beta-alanine ligase, C-terminal domain"/>
    <property type="match status" value="1"/>
</dbReference>
<dbReference type="HAMAP" id="MF_00158">
    <property type="entry name" value="PanC"/>
    <property type="match status" value="1"/>
</dbReference>
<dbReference type="InterPro" id="IPR003721">
    <property type="entry name" value="Pantoate_ligase"/>
</dbReference>
<dbReference type="InterPro" id="IPR042176">
    <property type="entry name" value="Pantoate_ligase_C"/>
</dbReference>
<dbReference type="InterPro" id="IPR014729">
    <property type="entry name" value="Rossmann-like_a/b/a_fold"/>
</dbReference>
<dbReference type="NCBIfam" id="TIGR00018">
    <property type="entry name" value="panC"/>
    <property type="match status" value="1"/>
</dbReference>
<dbReference type="PANTHER" id="PTHR21299">
    <property type="entry name" value="CYTIDYLATE KINASE/PANTOATE-BETA-ALANINE LIGASE"/>
    <property type="match status" value="1"/>
</dbReference>
<dbReference type="PANTHER" id="PTHR21299:SF1">
    <property type="entry name" value="PANTOATE--BETA-ALANINE LIGASE"/>
    <property type="match status" value="1"/>
</dbReference>
<dbReference type="Pfam" id="PF02569">
    <property type="entry name" value="Pantoate_ligase"/>
    <property type="match status" value="1"/>
</dbReference>
<dbReference type="SUPFAM" id="SSF52374">
    <property type="entry name" value="Nucleotidylyl transferase"/>
    <property type="match status" value="1"/>
</dbReference>
<keyword id="KW-0067">ATP-binding</keyword>
<keyword id="KW-0963">Cytoplasm</keyword>
<keyword id="KW-0436">Ligase</keyword>
<keyword id="KW-0547">Nucleotide-binding</keyword>
<keyword id="KW-0566">Pantothenate biosynthesis</keyword>
<name>PANC_LEGPL</name>